<dbReference type="EMBL" id="CH445325">
    <property type="protein sequence ID" value="EAT92518.1"/>
    <property type="molecule type" value="Genomic_DNA"/>
</dbReference>
<dbReference type="RefSeq" id="XP_001791682.1">
    <property type="nucleotide sequence ID" value="XM_001791630.1"/>
</dbReference>
<dbReference type="FunCoup" id="Q0V4P1">
    <property type="interactions" value="70"/>
</dbReference>
<dbReference type="STRING" id="321614.Q0V4P1"/>
<dbReference type="EnsemblFungi" id="SNOT_01023">
    <property type="protein sequence ID" value="SNOT_01023"/>
    <property type="gene ID" value="SNOG_01023"/>
</dbReference>
<dbReference type="GeneID" id="5967572"/>
<dbReference type="KEGG" id="pno:SNOG_01023"/>
<dbReference type="VEuPathDB" id="FungiDB:JI435_010230"/>
<dbReference type="eggNOG" id="KOG4431">
    <property type="taxonomic scope" value="Eukaryota"/>
</dbReference>
<dbReference type="HOGENOM" id="CLU_087356_0_2_1"/>
<dbReference type="InParanoid" id="Q0V4P1"/>
<dbReference type="OMA" id="YYRTERT"/>
<dbReference type="OrthoDB" id="6604018at2759"/>
<dbReference type="Proteomes" id="UP000001055">
    <property type="component" value="Unassembled WGS sequence"/>
</dbReference>
<dbReference type="GO" id="GO:0031966">
    <property type="term" value="C:mitochondrial membrane"/>
    <property type="evidence" value="ECO:0007669"/>
    <property type="project" value="UniProtKB-SubCell"/>
</dbReference>
<dbReference type="GO" id="GO:0005739">
    <property type="term" value="C:mitochondrion"/>
    <property type="evidence" value="ECO:0000318"/>
    <property type="project" value="GO_Central"/>
</dbReference>
<dbReference type="GO" id="GO:0097250">
    <property type="term" value="P:mitochondrial respirasome assembly"/>
    <property type="evidence" value="ECO:0000318"/>
    <property type="project" value="GO_Central"/>
</dbReference>
<dbReference type="Gene3D" id="6.10.140.1320">
    <property type="match status" value="1"/>
</dbReference>
<dbReference type="InterPro" id="IPR007667">
    <property type="entry name" value="Hypoxia_induced_domain"/>
</dbReference>
<dbReference type="InterPro" id="IPR050355">
    <property type="entry name" value="RCF1"/>
</dbReference>
<dbReference type="PANTHER" id="PTHR12297:SF3">
    <property type="entry name" value="HIG1 DOMAIN FAMILY MEMBER 1A"/>
    <property type="match status" value="1"/>
</dbReference>
<dbReference type="PANTHER" id="PTHR12297">
    <property type="entry name" value="HYPOXIA-INDUCBILE GENE 1 HIG1 -RELATED"/>
    <property type="match status" value="1"/>
</dbReference>
<dbReference type="Pfam" id="PF04588">
    <property type="entry name" value="HIG_1_N"/>
    <property type="match status" value="1"/>
</dbReference>
<dbReference type="PROSITE" id="PS51503">
    <property type="entry name" value="HIG1"/>
    <property type="match status" value="1"/>
</dbReference>
<protein>
    <recommendedName>
        <fullName>Respiratory supercomplex factor 1, mitochondrial</fullName>
    </recommendedName>
</protein>
<organism>
    <name type="scientific">Phaeosphaeria nodorum (strain SN15 / ATCC MYA-4574 / FGSC 10173)</name>
    <name type="common">Glume blotch fungus</name>
    <name type="synonym">Parastagonospora nodorum</name>
    <dbReference type="NCBI Taxonomy" id="321614"/>
    <lineage>
        <taxon>Eukaryota</taxon>
        <taxon>Fungi</taxon>
        <taxon>Dikarya</taxon>
        <taxon>Ascomycota</taxon>
        <taxon>Pezizomycotina</taxon>
        <taxon>Dothideomycetes</taxon>
        <taxon>Pleosporomycetidae</taxon>
        <taxon>Pleosporales</taxon>
        <taxon>Pleosporineae</taxon>
        <taxon>Phaeosphaeriaceae</taxon>
        <taxon>Parastagonospora</taxon>
    </lineage>
</organism>
<keyword id="KW-0175">Coiled coil</keyword>
<keyword id="KW-0472">Membrane</keyword>
<keyword id="KW-0496">Mitochondrion</keyword>
<keyword id="KW-0812">Transmembrane</keyword>
<keyword id="KW-1133">Transmembrane helix</keyword>
<evidence type="ECO:0000250" key="1"/>
<evidence type="ECO:0000255" key="2">
    <source>
        <dbReference type="PROSITE-ProRule" id="PRU00836"/>
    </source>
</evidence>
<evidence type="ECO:0000305" key="3"/>
<comment type="function">
    <text evidence="1">Cytochrome c oxidase subunit which plays a role in assembly of respiratory supercomplexes.</text>
</comment>
<comment type="subunit">
    <text evidence="1">Associates with the respiratory chain complex III/complex IV supercomplex.</text>
</comment>
<comment type="subcellular location">
    <subcellularLocation>
        <location evidence="2">Mitochondrion membrane</location>
        <topology evidence="2">Multi-pass membrane protein</topology>
    </subcellularLocation>
</comment>
<comment type="similarity">
    <text evidence="3">Belongs to the RCF1 family.</text>
</comment>
<accession>Q0V4P1</accession>
<reference key="1">
    <citation type="journal article" date="2007" name="Plant Cell">
        <title>Dothideomycete-plant interactions illuminated by genome sequencing and EST analysis of the wheat pathogen Stagonospora nodorum.</title>
        <authorList>
            <person name="Hane J.K."/>
            <person name="Lowe R.G.T."/>
            <person name="Solomon P.S."/>
            <person name="Tan K.-C."/>
            <person name="Schoch C.L."/>
            <person name="Spatafora J.W."/>
            <person name="Crous P.W."/>
            <person name="Kodira C.D."/>
            <person name="Birren B.W."/>
            <person name="Galagan J.E."/>
            <person name="Torriani S.F.F."/>
            <person name="McDonald B.A."/>
            <person name="Oliver R.P."/>
        </authorList>
    </citation>
    <scope>NUCLEOTIDE SEQUENCE [LARGE SCALE GENOMIC DNA]</scope>
    <source>
        <strain>SN15 / ATCC MYA-4574 / FGSC 10173</strain>
    </source>
</reference>
<name>RCF1_PHANO</name>
<sequence>MAGMGPPNSAPLPSSFDENADFYNENTIDKIWRRFREEPLIPFGCGLTAWAIVGASRSMRKGDHKMTNLYFRRRLYAQSFTIAVLVIGNLYWQKDRVKRKDYERMKAETERKEKRDRWLRELEMRDEEDKAWKERLAKKTRGAADEAKGVTDMVAEKTKELKDQTLGK</sequence>
<gene>
    <name type="primary">RCF1</name>
    <name type="synonym">AIM31</name>
    <name type="ORF">SNOG_01023</name>
</gene>
<proteinExistence type="inferred from homology"/>
<feature type="chain" id="PRO_0000399648" description="Respiratory supercomplex factor 1, mitochondrial">
    <location>
        <begin position="1"/>
        <end position="168"/>
    </location>
</feature>
<feature type="transmembrane region" description="Helical" evidence="2">
    <location>
        <begin position="40"/>
        <end position="56"/>
    </location>
</feature>
<feature type="transmembrane region" description="Helical" evidence="2">
    <location>
        <begin position="75"/>
        <end position="92"/>
    </location>
</feature>
<feature type="domain" description="HIG1" evidence="2">
    <location>
        <begin position="12"/>
        <end position="103"/>
    </location>
</feature>